<sequence length="291" mass="32488">MTTESTSTVTAKIPAPATPYQGDIARYWNNEARPVNLRLGDVDGLYHHHYGIGAVDHAALGDPADSEYEKKLIAELHRLESAQAEFLMDHLGPIGSDDTLVDAGCGRGGSMVMAHRRFGCKVEGVTLSASQADFGNARARELRIEDHVRSRVCNMLDTPFDKGSIAASWNNESTMYVDLHDLFAEHSRFLEVGGRYVTITGCWNPRYGQPSKWVSQINAHFECNIHSRREYLRAMADNRLVPHTIVDLTPDTLPYWELRATSSLVTGIEKAFIESYRDGSFQYVLIAADRV</sequence>
<keyword id="KW-0460">Magnesium</keyword>
<keyword id="KW-0489">Methyltransferase</keyword>
<keyword id="KW-0949">S-adenosyl-L-methionine</keyword>
<keyword id="KW-0808">Transferase</keyword>
<proteinExistence type="evidence at protein level"/>
<name>GPPMT_STRA7</name>
<dbReference type="EC" id="2.1.1.255"/>
<dbReference type="EMBL" id="AM238663">
    <property type="protein sequence ID" value="CAJ89345.1"/>
    <property type="molecule type" value="Genomic_DNA"/>
</dbReference>
<dbReference type="EMBL" id="CP012382">
    <property type="protein sequence ID" value="AKZ53459.1"/>
    <property type="molecule type" value="Genomic_DNA"/>
</dbReference>
<dbReference type="RefSeq" id="WP_053126187.1">
    <property type="nucleotide sequence ID" value="NZ_CP012382.1"/>
</dbReference>
<dbReference type="SMR" id="A3KI18"/>
<dbReference type="STRING" id="1889.SAM40697_0347"/>
<dbReference type="KEGG" id="samb:SAM23877_0410"/>
<dbReference type="PATRIC" id="fig|1889.10.peg.399"/>
<dbReference type="BRENDA" id="2.1.1.255">
    <property type="organism ID" value="5973"/>
</dbReference>
<dbReference type="Proteomes" id="UP000061018">
    <property type="component" value="Chromosome"/>
</dbReference>
<dbReference type="GO" id="GO:0008169">
    <property type="term" value="F:C-methyltransferase activity"/>
    <property type="evidence" value="ECO:0000250"/>
    <property type="project" value="UniProtKB"/>
</dbReference>
<dbReference type="GO" id="GO:0000287">
    <property type="term" value="F:magnesium ion binding"/>
    <property type="evidence" value="ECO:0007669"/>
    <property type="project" value="InterPro"/>
</dbReference>
<dbReference type="GO" id="GO:1904047">
    <property type="term" value="F:S-adenosyl-L-methionine binding"/>
    <property type="evidence" value="ECO:0007669"/>
    <property type="project" value="InterPro"/>
</dbReference>
<dbReference type="GO" id="GO:0008757">
    <property type="term" value="F:S-adenosylmethionine-dependent methyltransferase activity"/>
    <property type="evidence" value="ECO:0000250"/>
    <property type="project" value="UniProtKB"/>
</dbReference>
<dbReference type="GO" id="GO:0032259">
    <property type="term" value="P:methylation"/>
    <property type="evidence" value="ECO:0007669"/>
    <property type="project" value="UniProtKB-KW"/>
</dbReference>
<dbReference type="GO" id="GO:0042214">
    <property type="term" value="P:terpene metabolic process"/>
    <property type="evidence" value="ECO:0000314"/>
    <property type="project" value="UniProtKB"/>
</dbReference>
<dbReference type="CDD" id="cd02440">
    <property type="entry name" value="AdoMet_MTases"/>
    <property type="match status" value="1"/>
</dbReference>
<dbReference type="FunFam" id="3.40.50.150:FF:000183">
    <property type="entry name" value="Geranyl diphosphate 2-C-methyltransferase"/>
    <property type="match status" value="1"/>
</dbReference>
<dbReference type="Gene3D" id="3.40.50.150">
    <property type="entry name" value="Vaccinia Virus protein VP39"/>
    <property type="match status" value="1"/>
</dbReference>
<dbReference type="InterPro" id="IPR050447">
    <property type="entry name" value="Erg6_SMT_methyltransf"/>
</dbReference>
<dbReference type="InterPro" id="IPR049645">
    <property type="entry name" value="GPPMT_Stmyces"/>
</dbReference>
<dbReference type="InterPro" id="IPR029063">
    <property type="entry name" value="SAM-dependent_MTases_sf"/>
</dbReference>
<dbReference type="NCBIfam" id="NF041943">
    <property type="entry name" value="GPPMT_Stmyces"/>
    <property type="match status" value="1"/>
</dbReference>
<dbReference type="PANTHER" id="PTHR44068:SF11">
    <property type="entry name" value="GERANYL DIPHOSPHATE 2-C-METHYLTRANSFERASE"/>
    <property type="match status" value="1"/>
</dbReference>
<dbReference type="PANTHER" id="PTHR44068">
    <property type="entry name" value="ZGC:194242"/>
    <property type="match status" value="1"/>
</dbReference>
<dbReference type="Pfam" id="PF02353">
    <property type="entry name" value="CMAS"/>
    <property type="match status" value="1"/>
</dbReference>
<dbReference type="SUPFAM" id="SSF53335">
    <property type="entry name" value="S-adenosyl-L-methionine-dependent methyltransferases"/>
    <property type="match status" value="1"/>
</dbReference>
<organism>
    <name type="scientific">Streptomyces ambofaciens (strain ATCC 23877 / 3486 / DSM 40053 / JCM 4204 / NBRC 12836 / NRRL B-2516)</name>
    <dbReference type="NCBI Taxonomy" id="278992"/>
    <lineage>
        <taxon>Bacteria</taxon>
        <taxon>Bacillati</taxon>
        <taxon>Actinomycetota</taxon>
        <taxon>Actinomycetes</taxon>
        <taxon>Kitasatosporales</taxon>
        <taxon>Streptomycetaceae</taxon>
        <taxon>Streptomyces</taxon>
    </lineage>
</organism>
<comment type="function">
    <text evidence="2">Catalyzes the SAM-dependent methylation of geranyl diphosphate (GPP) to yield (E)-2-methylgeranyl diphosphate (2-MeGPP).</text>
</comment>
<comment type="catalytic activity">
    <reaction>
        <text>(2E)-geranyl diphosphate + S-adenosyl-L-methionine = (E)-2-methylgeranyl diphosphate + S-adenosyl-L-homocysteine + H(+)</text>
        <dbReference type="Rhea" id="RHEA:32519"/>
        <dbReference type="ChEBI" id="CHEBI:15378"/>
        <dbReference type="ChEBI" id="CHEBI:57856"/>
        <dbReference type="ChEBI" id="CHEBI:58057"/>
        <dbReference type="ChEBI" id="CHEBI:59789"/>
        <dbReference type="ChEBI" id="CHEBI:61984"/>
        <dbReference type="EC" id="2.1.1.255"/>
    </reaction>
</comment>
<comment type="cofactor">
    <cofactor evidence="1">
        <name>Mg(2+)</name>
        <dbReference type="ChEBI" id="CHEBI:18420"/>
    </cofactor>
</comment>
<comment type="similarity">
    <text evidence="1">Belongs to the geranyl diphosphate 2-C-methyltransferase family.</text>
</comment>
<evidence type="ECO:0000305" key="1"/>
<evidence type="ECO:0000305" key="2">
    <source>
    </source>
</evidence>
<evidence type="ECO:0000312" key="3">
    <source>
        <dbReference type="EMBL" id="AKZ53459.1"/>
    </source>
</evidence>
<evidence type="ECO:0000312" key="4">
    <source>
        <dbReference type="EMBL" id="CAJ89345.1"/>
    </source>
</evidence>
<reference key="1">
    <citation type="journal article" date="2006" name="Mol. Biol. Evol.">
        <title>Evolution of the terminal regions of the Streptomyces linear chromosome.</title>
        <authorList>
            <person name="Choulet F."/>
            <person name="Aigle B."/>
            <person name="Gallois A."/>
            <person name="Mangenot S."/>
            <person name="Gerbaud C."/>
            <person name="Truong C."/>
            <person name="Francou F.-X."/>
            <person name="Fourrier C."/>
            <person name="Guerineau M."/>
            <person name="Decaris B."/>
            <person name="Barbe V."/>
            <person name="Pernodet J.-L."/>
            <person name="Leblond P."/>
        </authorList>
    </citation>
    <scope>NUCLEOTIDE SEQUENCE [LARGE SCALE GENOMIC DNA]</scope>
    <source>
        <strain>ATCC 23877 / 3486 / DSM 40053 / JCM 4204 / NBRC 12836 / NRRL B-2516</strain>
    </source>
</reference>
<reference key="2">
    <citation type="journal article" date="2015" name="J. Biotechnol.">
        <title>Complete genome sequence of Streptomyces ambofaciens ATCC 23877, the spiramycin producer.</title>
        <authorList>
            <person name="Thibessard A."/>
            <person name="Haas D."/>
            <person name="Gerbaud C."/>
            <person name="Aigle B."/>
            <person name="Lautru S."/>
            <person name="Pernodet J.L."/>
            <person name="Leblond P."/>
        </authorList>
    </citation>
    <scope>NUCLEOTIDE SEQUENCE [LARGE SCALE GENOMIC DNA]</scope>
    <source>
        <strain>ATCC 23877 / 3486 / DSM 40053 / JCM 4204 / NBRC 12836 / NRRL B-2516</strain>
    </source>
</reference>
<reference key="3">
    <citation type="journal article" date="2008" name="Proc. Natl. Acad. Sci. U.S.A.">
        <title>Identification and functional analysis of genes controlling biosynthesis of 2-methylisoborneol.</title>
        <authorList>
            <person name="Komatsu M."/>
            <person name="Tsuda M."/>
            <person name="Omura S."/>
            <person name="Oikawa H."/>
            <person name="Ikeda H."/>
        </authorList>
    </citation>
    <scope>FUNCTION IN 2-METHYLISOBORNEOL BIOSYNTHESIS</scope>
    <scope>PATHWAY</scope>
    <source>
        <strain>ATCC 23877 / 3486 / DSM 40053 / JCM 4204 / NBRC 12836 / NRRL B-2516</strain>
    </source>
</reference>
<accession>A3KI18</accession>
<accession>A0A0K2AKD5</accession>
<protein>
    <recommendedName>
        <fullName>Geranyl diphosphate 2-C-methyltransferase</fullName>
        <shortName>GPP methyltransferase</shortName>
        <ecNumber>2.1.1.255</ecNumber>
    </recommendedName>
</protein>
<gene>
    <name evidence="3" type="ORF">SAM23877_0410</name>
    <name evidence="4" type="ORF">SAML0358</name>
</gene>
<feature type="chain" id="PRO_0000403381" description="Geranyl diphosphate 2-C-methyltransferase">
    <location>
        <begin position="1"/>
        <end position="291"/>
    </location>
</feature>